<keyword id="KW-0204">Cytolysis</keyword>
<keyword id="KW-0903">Direct protein sequencing</keyword>
<keyword id="KW-0406">Ion transport</keyword>
<keyword id="KW-0472">Membrane</keyword>
<keyword id="KW-0166">Nematocyst</keyword>
<keyword id="KW-0964">Secreted</keyword>
<keyword id="KW-1052">Target cell membrane</keyword>
<keyword id="KW-1053">Target membrane</keyword>
<keyword id="KW-0800">Toxin</keyword>
<keyword id="KW-0812">Transmembrane</keyword>
<keyword id="KW-0813">Transport</keyword>
<evidence type="ECO:0000250" key="1"/>
<evidence type="ECO:0000250" key="2">
    <source>
        <dbReference type="UniProtKB" id="B9W5G6"/>
    </source>
</evidence>
<evidence type="ECO:0000250" key="3">
    <source>
        <dbReference type="UniProtKB" id="P07845"/>
    </source>
</evidence>
<evidence type="ECO:0000250" key="4">
    <source>
        <dbReference type="UniProtKB" id="P39088"/>
    </source>
</evidence>
<evidence type="ECO:0000250" key="5">
    <source>
        <dbReference type="UniProtKB" id="P61914"/>
    </source>
</evidence>
<evidence type="ECO:0000269" key="6">
    <source>
    </source>
</evidence>
<evidence type="ECO:0000303" key="7">
    <source>
    </source>
</evidence>
<evidence type="ECO:0000305" key="8"/>
<reference key="1">
    <citation type="journal article" date="2000" name="Toxicon">
        <title>Amino acid sequence studies on cytolytic toxins from sea anemone Heteractis magnifica, Entacmaea quadricolor and Stichodactyla mertensii (Anthozoa).</title>
        <authorList>
            <person name="Samejima Y."/>
            <person name="Yanagisawa M."/>
            <person name="Aoki-Tomomatsu Y."/>
            <person name="Iwasaki E."/>
            <person name="Ando J."/>
            <person name="Mebs D."/>
        </authorList>
    </citation>
    <scope>PROTEIN SEQUENCE</scope>
    <scope>FUNCTION</scope>
</reference>
<reference key="2">
    <citation type="journal article" date="2009" name="Toxicon">
        <title>Molecular mechanism of pore formation by actinoporins.</title>
        <authorList>
            <person name="Kristan K.C."/>
            <person name="Viero G."/>
            <person name="Dalla Serra M."/>
            <person name="Macek P."/>
            <person name="Anderluh G."/>
        </authorList>
    </citation>
    <scope>REVIEW</scope>
</reference>
<sequence>SLALAGTIIEGASLTFSVLTTILDALGSVSRKIDVGVYNE</sequence>
<proteinExistence type="evidence at protein level"/>
<organism>
    <name type="scientific">Entacmaea quadricolor</name>
    <name type="common">Bubble-tip anemone</name>
    <name type="synonym">Parasicyonis actinostoloides</name>
    <dbReference type="NCBI Taxonomy" id="6118"/>
    <lineage>
        <taxon>Eukaryota</taxon>
        <taxon>Metazoa</taxon>
        <taxon>Cnidaria</taxon>
        <taxon>Anthozoa</taxon>
        <taxon>Hexacorallia</taxon>
        <taxon>Actiniaria</taxon>
        <taxon>Actiniidae</taxon>
        <taxon>Entacmaea</taxon>
    </lineage>
</organism>
<accession>P0DMX3</accession>
<dbReference type="SMR" id="P0DMX3"/>
<dbReference type="GO" id="GO:0005576">
    <property type="term" value="C:extracellular region"/>
    <property type="evidence" value="ECO:0007669"/>
    <property type="project" value="UniProtKB-SubCell"/>
</dbReference>
<dbReference type="GO" id="GO:0042151">
    <property type="term" value="C:nematocyst"/>
    <property type="evidence" value="ECO:0007669"/>
    <property type="project" value="UniProtKB-SubCell"/>
</dbReference>
<dbReference type="GO" id="GO:0044218">
    <property type="term" value="C:other organism cell membrane"/>
    <property type="evidence" value="ECO:0007669"/>
    <property type="project" value="UniProtKB-KW"/>
</dbReference>
<dbReference type="GO" id="GO:0046930">
    <property type="term" value="C:pore complex"/>
    <property type="evidence" value="ECO:0007669"/>
    <property type="project" value="InterPro"/>
</dbReference>
<dbReference type="GO" id="GO:0015267">
    <property type="term" value="F:channel activity"/>
    <property type="evidence" value="ECO:0007669"/>
    <property type="project" value="InterPro"/>
</dbReference>
<dbReference type="GO" id="GO:0090729">
    <property type="term" value="F:toxin activity"/>
    <property type="evidence" value="ECO:0007669"/>
    <property type="project" value="UniProtKB-KW"/>
</dbReference>
<dbReference type="GO" id="GO:0051715">
    <property type="term" value="P:cytolysis in another organism"/>
    <property type="evidence" value="ECO:0007669"/>
    <property type="project" value="InterPro"/>
</dbReference>
<dbReference type="GO" id="GO:0006812">
    <property type="term" value="P:monoatomic cation transport"/>
    <property type="evidence" value="ECO:0007669"/>
    <property type="project" value="InterPro"/>
</dbReference>
<dbReference type="GO" id="GO:0046931">
    <property type="term" value="P:pore complex assembly"/>
    <property type="evidence" value="ECO:0007669"/>
    <property type="project" value="InterPro"/>
</dbReference>
<dbReference type="Gene3D" id="2.60.270.20">
    <property type="entry name" value="Cytolysin/lectin"/>
    <property type="match status" value="1"/>
</dbReference>
<dbReference type="InterPro" id="IPR009104">
    <property type="entry name" value="Anemon_actinoporin-like"/>
</dbReference>
<dbReference type="InterPro" id="IPR015926">
    <property type="entry name" value="Cytolysin/lectin"/>
</dbReference>
<dbReference type="Pfam" id="PF06369">
    <property type="entry name" value="Anemone_cytotox"/>
    <property type="match status" value="1"/>
</dbReference>
<dbReference type="SUPFAM" id="SSF63724">
    <property type="entry name" value="Cytolysin/lectin"/>
    <property type="match status" value="1"/>
</dbReference>
<comment type="function">
    <text evidence="4 6">Pore-forming protein that forms cations-selective hydrophilic pores of around 1 nm and causes cytolysis. Pore formation is a multi-step process that involves specific recognition of membrane sphingomyelin (but neither cholesterol nor phosphatidylcholine) using aromatic rich region and adjacent phosphocholine (POC) binding site, firm binding to the membrane (mainly driven by hydrophobic interactions) accompanied by the transfer of the N-terminal region to the lipid-water interface and finally pore formation after oligomerization of monomers (By similarity). This toxin shows hemolytic activities (PubMed:10665806).</text>
</comment>
<comment type="subunit">
    <text evidence="2">Octamer or nonamer in membranes. Monomer in the soluble state.</text>
</comment>
<comment type="subcellular location">
    <subcellularLocation>
        <location evidence="2">Secreted</location>
    </subcellularLocation>
    <subcellularLocation>
        <location evidence="3">Nematocyst</location>
    </subcellularLocation>
    <subcellularLocation>
        <location evidence="2">Target cell membrane</location>
    </subcellularLocation>
    <text evidence="2">Forms an alpha-helical membrane channel in the prey.</text>
</comment>
<comment type="domain">
    <text evidence="5">Composed of a long N-terminal alpha-helix and a core region rich in beta-sheet structures. Before the pore formation, the alpha-helix binds the lipid membrane, partitions into the lipid-water interface and stabilizes the monomeric molecule on the membrane. Finally, it traverses the bilayer, thus forming the transmembrane pore.</text>
</comment>
<comment type="domain">
    <text evidence="1">The Trp-rich region is important for the binding to lipid membrane.</text>
</comment>
<comment type="similarity">
    <text evidence="8">Belongs to the actinoporin family. Sea anemone subfamily.</text>
</comment>
<protein>
    <recommendedName>
        <fullName evidence="7">Cytolysin EnT</fullName>
    </recommendedName>
    <alternativeName>
        <fullName evidence="8">DELTA-actitoxin</fullName>
    </alternativeName>
</protein>
<feature type="chain" id="PRO_0000433582" description="Cytolysin EnT">
    <location>
        <begin position="1"/>
        <end position="40" status="greater than"/>
    </location>
</feature>
<feature type="region of interest" description="Plays an important role in the hemolytic activity" evidence="3">
    <location>
        <begin position="3"/>
        <end position="12"/>
    </location>
</feature>
<feature type="region of interest" description="N-terminal region" evidence="5">
    <location>
        <begin position="11"/>
        <end position="30"/>
    </location>
</feature>
<feature type="non-terminal residue">
    <location>
        <position position="40"/>
    </location>
</feature>
<name>ACTP_ENTQU</name>